<feature type="chain" id="PRO_0000364476" description="Fructose-1,6-bisphosphatase class 1">
    <location>
        <begin position="1"/>
        <end position="340"/>
    </location>
</feature>
<feature type="binding site" evidence="1">
    <location>
        <position position="107"/>
    </location>
    <ligand>
        <name>Mg(2+)</name>
        <dbReference type="ChEBI" id="CHEBI:18420"/>
        <label>1</label>
    </ligand>
</feature>
<feature type="binding site" evidence="1">
    <location>
        <position position="126"/>
    </location>
    <ligand>
        <name>Mg(2+)</name>
        <dbReference type="ChEBI" id="CHEBI:18420"/>
        <label>1</label>
    </ligand>
</feature>
<feature type="binding site" evidence="1">
    <location>
        <position position="126"/>
    </location>
    <ligand>
        <name>Mg(2+)</name>
        <dbReference type="ChEBI" id="CHEBI:18420"/>
        <label>2</label>
    </ligand>
</feature>
<feature type="binding site" evidence="1">
    <location>
        <position position="128"/>
    </location>
    <ligand>
        <name>Mg(2+)</name>
        <dbReference type="ChEBI" id="CHEBI:18420"/>
        <label>1</label>
    </ligand>
</feature>
<feature type="binding site" evidence="1">
    <location>
        <position position="129"/>
    </location>
    <ligand>
        <name>Mg(2+)</name>
        <dbReference type="ChEBI" id="CHEBI:18420"/>
        <label>2</label>
    </ligand>
</feature>
<feature type="binding site" evidence="1">
    <location>
        <position position="215"/>
    </location>
    <ligand>
        <name>substrate</name>
    </ligand>
</feature>
<feature type="binding site" evidence="1">
    <location>
        <position position="287"/>
    </location>
    <ligand>
        <name>Mg(2+)</name>
        <dbReference type="ChEBI" id="CHEBI:18420"/>
        <label>2</label>
    </ligand>
</feature>
<name>F16PA_BRUAB</name>
<sequence length="340" mass="36156">MTLVGNFSPLVLVGDSDRVEAETVGAYLDGWAGHDKVRLATANAIKAILSGAGRLVGRIARGYLPGDPGKLVGVNSDQDQQKSIDVGSHNLFVELLIAAGVASILSEEADLPVAGKADGLVAVAIDPLDGSGNVGLGAPLGTIFSIFPADVEEPFLQPGNRQIAAGYVSYGNSVDLGFSVGEGVIFATLDPVSGQFHITRRNVKLPERTSDLAFNASVQRHLSAGMQAYVNDAFLGKDGPRGRNFNMRWLGAAVGDMHRIMQRGGLFFYVNDSRPGYEKGRLRLVYEANPIAFLAREAGGKATDGSRPILDIVPQTYHERSALVFGVAEEVDILGEYFVK</sequence>
<evidence type="ECO:0000255" key="1">
    <source>
        <dbReference type="HAMAP-Rule" id="MF_01855"/>
    </source>
</evidence>
<keyword id="KW-0119">Carbohydrate metabolism</keyword>
<keyword id="KW-0963">Cytoplasm</keyword>
<keyword id="KW-0378">Hydrolase</keyword>
<keyword id="KW-0460">Magnesium</keyword>
<keyword id="KW-0479">Metal-binding</keyword>
<organism>
    <name type="scientific">Brucella abortus biovar 1 (strain 9-941)</name>
    <dbReference type="NCBI Taxonomy" id="262698"/>
    <lineage>
        <taxon>Bacteria</taxon>
        <taxon>Pseudomonadati</taxon>
        <taxon>Pseudomonadota</taxon>
        <taxon>Alphaproteobacteria</taxon>
        <taxon>Hyphomicrobiales</taxon>
        <taxon>Brucellaceae</taxon>
        <taxon>Brucella/Ochrobactrum group</taxon>
        <taxon>Brucella</taxon>
    </lineage>
</organism>
<reference key="1">
    <citation type="journal article" date="2005" name="J. Bacteriol.">
        <title>Completion of the genome sequence of Brucella abortus and comparison to the highly similar genomes of Brucella melitensis and Brucella suis.</title>
        <authorList>
            <person name="Halling S.M."/>
            <person name="Peterson-Burch B.D."/>
            <person name="Bricker B.J."/>
            <person name="Zuerner R.L."/>
            <person name="Qing Z."/>
            <person name="Li L.-L."/>
            <person name="Kapur V."/>
            <person name="Alt D.P."/>
            <person name="Olsen S.C."/>
        </authorList>
    </citation>
    <scope>NUCLEOTIDE SEQUENCE [LARGE SCALE GENOMIC DNA]</scope>
    <source>
        <strain>9-941</strain>
    </source>
</reference>
<accession>Q578Z3</accession>
<gene>
    <name evidence="1" type="primary">fbp</name>
    <name type="ordered locus">BruAb2_0360</name>
</gene>
<protein>
    <recommendedName>
        <fullName evidence="1">Fructose-1,6-bisphosphatase class 1</fullName>
        <shortName evidence="1">FBPase class 1</shortName>
        <ecNumber evidence="1">3.1.3.11</ecNumber>
    </recommendedName>
    <alternativeName>
        <fullName evidence="1">D-fructose-1,6-bisphosphate 1-phosphohydrolase class 1</fullName>
    </alternativeName>
</protein>
<proteinExistence type="inferred from homology"/>
<comment type="catalytic activity">
    <reaction evidence="1">
        <text>beta-D-fructose 1,6-bisphosphate + H2O = beta-D-fructose 6-phosphate + phosphate</text>
        <dbReference type="Rhea" id="RHEA:11064"/>
        <dbReference type="ChEBI" id="CHEBI:15377"/>
        <dbReference type="ChEBI" id="CHEBI:32966"/>
        <dbReference type="ChEBI" id="CHEBI:43474"/>
        <dbReference type="ChEBI" id="CHEBI:57634"/>
        <dbReference type="EC" id="3.1.3.11"/>
    </reaction>
</comment>
<comment type="cofactor">
    <cofactor evidence="1">
        <name>Mg(2+)</name>
        <dbReference type="ChEBI" id="CHEBI:18420"/>
    </cofactor>
    <text evidence="1">Binds 2 magnesium ions per subunit.</text>
</comment>
<comment type="pathway">
    <text evidence="1">Carbohydrate biosynthesis; gluconeogenesis.</text>
</comment>
<comment type="subunit">
    <text evidence="1">Homotetramer.</text>
</comment>
<comment type="subcellular location">
    <subcellularLocation>
        <location evidence="1">Cytoplasm</location>
    </subcellularLocation>
</comment>
<comment type="similarity">
    <text evidence="1">Belongs to the FBPase class 1 family.</text>
</comment>
<dbReference type="EC" id="3.1.3.11" evidence="1"/>
<dbReference type="EMBL" id="AE017224">
    <property type="protein sequence ID" value="AAX75791.1"/>
    <property type="molecule type" value="Genomic_DNA"/>
</dbReference>
<dbReference type="RefSeq" id="WP_002965774.1">
    <property type="nucleotide sequence ID" value="NC_006933.1"/>
</dbReference>
<dbReference type="SMR" id="Q578Z3"/>
<dbReference type="EnsemblBacteria" id="AAX75791">
    <property type="protein sequence ID" value="AAX75791"/>
    <property type="gene ID" value="BruAb2_0360"/>
</dbReference>
<dbReference type="KEGG" id="bmb:BruAb2_0360"/>
<dbReference type="HOGENOM" id="CLU_039977_0_0_5"/>
<dbReference type="UniPathway" id="UPA00138"/>
<dbReference type="Proteomes" id="UP000000540">
    <property type="component" value="Chromosome II"/>
</dbReference>
<dbReference type="GO" id="GO:0005829">
    <property type="term" value="C:cytosol"/>
    <property type="evidence" value="ECO:0007669"/>
    <property type="project" value="TreeGrafter"/>
</dbReference>
<dbReference type="GO" id="GO:0042132">
    <property type="term" value="F:fructose 1,6-bisphosphate 1-phosphatase activity"/>
    <property type="evidence" value="ECO:0007669"/>
    <property type="project" value="UniProtKB-UniRule"/>
</dbReference>
<dbReference type="GO" id="GO:0000287">
    <property type="term" value="F:magnesium ion binding"/>
    <property type="evidence" value="ECO:0007669"/>
    <property type="project" value="UniProtKB-UniRule"/>
</dbReference>
<dbReference type="GO" id="GO:0030388">
    <property type="term" value="P:fructose 1,6-bisphosphate metabolic process"/>
    <property type="evidence" value="ECO:0007669"/>
    <property type="project" value="TreeGrafter"/>
</dbReference>
<dbReference type="GO" id="GO:0006002">
    <property type="term" value="P:fructose 6-phosphate metabolic process"/>
    <property type="evidence" value="ECO:0007669"/>
    <property type="project" value="TreeGrafter"/>
</dbReference>
<dbReference type="GO" id="GO:0006000">
    <property type="term" value="P:fructose metabolic process"/>
    <property type="evidence" value="ECO:0007669"/>
    <property type="project" value="TreeGrafter"/>
</dbReference>
<dbReference type="GO" id="GO:0006094">
    <property type="term" value="P:gluconeogenesis"/>
    <property type="evidence" value="ECO:0007669"/>
    <property type="project" value="UniProtKB-UniRule"/>
</dbReference>
<dbReference type="GO" id="GO:0005986">
    <property type="term" value="P:sucrose biosynthetic process"/>
    <property type="evidence" value="ECO:0007669"/>
    <property type="project" value="TreeGrafter"/>
</dbReference>
<dbReference type="CDD" id="cd00354">
    <property type="entry name" value="FBPase"/>
    <property type="match status" value="1"/>
</dbReference>
<dbReference type="Gene3D" id="3.40.190.80">
    <property type="match status" value="1"/>
</dbReference>
<dbReference type="Gene3D" id="3.30.540.10">
    <property type="entry name" value="Fructose-1,6-Bisphosphatase, subunit A, domain 1"/>
    <property type="match status" value="1"/>
</dbReference>
<dbReference type="HAMAP" id="MF_01855">
    <property type="entry name" value="FBPase_class1"/>
    <property type="match status" value="1"/>
</dbReference>
<dbReference type="InterPro" id="IPR044015">
    <property type="entry name" value="FBPase_C_dom"/>
</dbReference>
<dbReference type="InterPro" id="IPR000146">
    <property type="entry name" value="FBPase_class-1"/>
</dbReference>
<dbReference type="InterPro" id="IPR033391">
    <property type="entry name" value="FBPase_N"/>
</dbReference>
<dbReference type="InterPro" id="IPR028343">
    <property type="entry name" value="FBPtase"/>
</dbReference>
<dbReference type="InterPro" id="IPR020548">
    <property type="entry name" value="Fructose_bisphosphatase_AS"/>
</dbReference>
<dbReference type="NCBIfam" id="NF006780">
    <property type="entry name" value="PRK09293.1-4"/>
    <property type="match status" value="1"/>
</dbReference>
<dbReference type="PANTHER" id="PTHR11556">
    <property type="entry name" value="FRUCTOSE-1,6-BISPHOSPHATASE-RELATED"/>
    <property type="match status" value="1"/>
</dbReference>
<dbReference type="PANTHER" id="PTHR11556:SF35">
    <property type="entry name" value="SEDOHEPTULOSE-1,7-BISPHOSPHATASE, CHLOROPLASTIC"/>
    <property type="match status" value="1"/>
</dbReference>
<dbReference type="Pfam" id="PF00316">
    <property type="entry name" value="FBPase"/>
    <property type="match status" value="1"/>
</dbReference>
<dbReference type="Pfam" id="PF18913">
    <property type="entry name" value="FBPase_C"/>
    <property type="match status" value="1"/>
</dbReference>
<dbReference type="PIRSF" id="PIRSF500210">
    <property type="entry name" value="FBPtase"/>
    <property type="match status" value="1"/>
</dbReference>
<dbReference type="PIRSF" id="PIRSF000904">
    <property type="entry name" value="FBPtase_SBPase"/>
    <property type="match status" value="1"/>
</dbReference>
<dbReference type="PRINTS" id="PR00115">
    <property type="entry name" value="F16BPHPHTASE"/>
</dbReference>
<dbReference type="SUPFAM" id="SSF56655">
    <property type="entry name" value="Carbohydrate phosphatase"/>
    <property type="match status" value="1"/>
</dbReference>
<dbReference type="PROSITE" id="PS00124">
    <property type="entry name" value="FBPASE"/>
    <property type="match status" value="1"/>
</dbReference>